<name>IFGF1_PENRF</name>
<comment type="function">
    <text evidence="2 3">Festuclavine synthase; part of the gene cluster that mediates the biosynthesis of isofumigaclavines, fungal ergot alkaloids (PubMed:28620689). The tryptophan dimethylallyltransferase ifgA catalyzes the first step of ergot alkaloid biosynthesis by condensing dimethylallyl diphosphate (DMAP) and tryptophan to form 4-dimethylallyl-L-tryptophan (PubMed:28620689). The second step is catalyzed by the methyltransferase ifgB that methylates 4-dimethylallyl-L-tryptophan in the presence of S-adenosyl-L-methionine, resulting in the formation of N-methyl-dimethylallyl-L-tryptophan (PubMed:28620689). The catalase ifgD and the FAD-dependent oxidoreductase ifgC then transform N-methyl-dimethylallyl-L-tryptophan to chanoclavine-I which is further oxidized by ifgE in the presence of NAD(+), resulting in the formation of chanoclavine-I aldehyde (PubMed:28902217). The chanoclavine-I aldehyde reductases ifgG and/or fgaOx3 reduce chanoclavine-I aldehyde to dihydrochanoclavine-I aldehyde that spontaneously dehydrates to form 6,8-dimethyl-6,7-didehydroergoline (PubMed:28620689, PubMed:28902217). The festuclavine dehydrogenases ifgF1 and/or ifgF2 then catalyze the reduction of 6,8-dimethyl-6,7-didehydroergoline to form festuclavine (PubMed:28620689). Hydrolysis of festuclavine by a yet undetermined cytochrome P450 monooxygenase (called ifgH) then leads to the formation of isofumigaclavine B which is in turn acetylated by ifgI to isofumigaclavine A (PubMed:28620689). Penicillium roqueforti has interestingly at least two sets of genes for the consumption of chanoclavine-I aldehyde on three different loci, the OYEs ifgG/fgaOx3 and the festuclavine synthase homologs ifgF1/ifgF2 (PubMed:28620689, PubMed:28902217). The reason for the duplication of these genes is unclear, probably to ensure the conversion of chanoclavine-I aldehyde by differential gene expression under various environmental conditions (PubMed:28902217).</text>
</comment>
<comment type="catalytic activity">
    <reaction evidence="1">
        <text>festuclavine + NAD(+) = 6,8-dimethyl-6,7-didehydroergoline + NADH + H(+)</text>
        <dbReference type="Rhea" id="RHEA:34055"/>
        <dbReference type="ChEBI" id="CHEBI:15378"/>
        <dbReference type="ChEBI" id="CHEBI:57540"/>
        <dbReference type="ChEBI" id="CHEBI:57945"/>
        <dbReference type="ChEBI" id="CHEBI:65034"/>
        <dbReference type="ChEBI" id="CHEBI:65045"/>
        <dbReference type="EC" id="1.5.1.44"/>
    </reaction>
</comment>
<comment type="pathway">
    <text evidence="6">Alkaloid biosynthesis; ergot alkaloid biosynthesis.</text>
</comment>
<comment type="similarity">
    <text evidence="5">Belongs to the fgaFS/easG family.</text>
</comment>
<accession>W6QRI9</accession>
<evidence type="ECO:0000250" key="1">
    <source>
        <dbReference type="UniProtKB" id="Q4WZ69"/>
    </source>
</evidence>
<evidence type="ECO:0000269" key="2">
    <source>
    </source>
</evidence>
<evidence type="ECO:0000269" key="3">
    <source>
    </source>
</evidence>
<evidence type="ECO:0000303" key="4">
    <source>
    </source>
</evidence>
<evidence type="ECO:0000305" key="5"/>
<evidence type="ECO:0000305" key="6">
    <source>
    </source>
</evidence>
<feature type="chain" id="PRO_0000444543" description="Festuclavine synthase I">
    <location>
        <begin position="1"/>
        <end position="287"/>
    </location>
</feature>
<dbReference type="EC" id="1.5.1.44" evidence="1"/>
<dbReference type="EMBL" id="HG792019">
    <property type="protein sequence ID" value="CDM36674.1"/>
    <property type="molecule type" value="Genomic_DNA"/>
</dbReference>
<dbReference type="SMR" id="W6QRI9"/>
<dbReference type="STRING" id="1365484.W6QRI9"/>
<dbReference type="OMA" id="REDAPNT"/>
<dbReference type="OrthoDB" id="9997102at2759"/>
<dbReference type="UniPathway" id="UPA00327"/>
<dbReference type="Proteomes" id="UP000030686">
    <property type="component" value="Unassembled WGS sequence"/>
</dbReference>
<dbReference type="GO" id="GO:0016491">
    <property type="term" value="F:oxidoreductase activity"/>
    <property type="evidence" value="ECO:0007669"/>
    <property type="project" value="UniProtKB-KW"/>
</dbReference>
<dbReference type="GO" id="GO:0035835">
    <property type="term" value="P:indole alkaloid biosynthetic process"/>
    <property type="evidence" value="ECO:0007669"/>
    <property type="project" value="UniProtKB-UniPathway"/>
</dbReference>
<dbReference type="Gene3D" id="3.40.50.720">
    <property type="entry name" value="NAD(P)-binding Rossmann-like Domain"/>
    <property type="match status" value="1"/>
</dbReference>
<dbReference type="Gene3D" id="3.90.25.10">
    <property type="entry name" value="UDP-galactose 4-epimerase, domain 1"/>
    <property type="match status" value="1"/>
</dbReference>
<dbReference type="InterPro" id="IPR051604">
    <property type="entry name" value="Ergot_Alk_Oxidoreductase"/>
</dbReference>
<dbReference type="InterPro" id="IPR019901">
    <property type="entry name" value="Ergot_alkaloid_biosynthesis"/>
</dbReference>
<dbReference type="InterPro" id="IPR036291">
    <property type="entry name" value="NAD(P)-bd_dom_sf"/>
</dbReference>
<dbReference type="NCBIfam" id="TIGR03649">
    <property type="entry name" value="ergot_EASG"/>
    <property type="match status" value="1"/>
</dbReference>
<dbReference type="PANTHER" id="PTHR43162">
    <property type="match status" value="1"/>
</dbReference>
<dbReference type="PANTHER" id="PTHR43162:SF1">
    <property type="entry name" value="PRESTALK A DIFFERENTIATION PROTEIN A"/>
    <property type="match status" value="1"/>
</dbReference>
<dbReference type="SUPFAM" id="SSF51735">
    <property type="entry name" value="NAD(P)-binding Rossmann-fold domains"/>
    <property type="match status" value="1"/>
</dbReference>
<protein>
    <recommendedName>
        <fullName evidence="4">Festuclavine synthase I</fullName>
        <ecNumber evidence="1">1.5.1.44</ecNumber>
    </recommendedName>
    <alternativeName>
        <fullName evidence="4">Festuclavine dehydrogenase ifgF1</fullName>
    </alternativeName>
    <alternativeName>
        <fullName evidence="4">Isofumigaclavine biosynthesis cluster A protein F1</fullName>
    </alternativeName>
</protein>
<gene>
    <name evidence="4" type="primary">ifgF1</name>
    <name type="ORF">PROQFM164_S05g000507</name>
</gene>
<reference key="1">
    <citation type="journal article" date="2014" name="Nat. Commun.">
        <title>Multiple recent horizontal transfers of a large genomic region in cheese making fungi.</title>
        <authorList>
            <person name="Cheeseman K."/>
            <person name="Ropars J."/>
            <person name="Renault P."/>
            <person name="Dupont J."/>
            <person name="Gouzy J."/>
            <person name="Branca A."/>
            <person name="Abraham A.-L."/>
            <person name="Ceppi M."/>
            <person name="Conseiller E."/>
            <person name="Debuchy R."/>
            <person name="Malagnac F."/>
            <person name="Goarin A."/>
            <person name="Silar P."/>
            <person name="Lacoste S."/>
            <person name="Sallet E."/>
            <person name="Bensimon A."/>
            <person name="Giraud T."/>
            <person name="Brygoo Y."/>
        </authorList>
    </citation>
    <scope>NUCLEOTIDE SEQUENCE [LARGE SCALE GENOMIC DNA]</scope>
    <source>
        <strain>FM164</strain>
    </source>
</reference>
<reference key="2">
    <citation type="journal article" date="2017" name="Appl. Microbiol. Biotechnol.">
        <title>Silencing of a second dimethylallyltryptophan synthase of Penicillium roqueforti reveals a novel clavine alkaloid gene cluster.</title>
        <authorList>
            <person name="Fernandez-Bodega A."/>
            <person name="Alvarez-Alvarez R."/>
            <person name="Liras P."/>
            <person name="Martin J.F."/>
        </authorList>
    </citation>
    <scope>FUNCTION</scope>
    <scope>PATHWAY</scope>
</reference>
<reference key="3">
    <citation type="journal article" date="2017" name="Org. Biomol. Chem.">
        <title>A bifunctional old yellow enzyme from Penicillium roqueforti is involved in ergot alkaloid biosynthesis.</title>
        <authorList>
            <person name="Gerhards N."/>
            <person name="Li S.M."/>
        </authorList>
    </citation>
    <scope>FUNCTION</scope>
</reference>
<sequence>MTILVLGGRGKTASRLAALLDAAKTPFLVGSSSTSQESPYNSSHFNWYEKTTWDNPFAEIGKHGLQPISAVYLVGPPTMDMVPPMIQFVDLACSKGVQRFVLVSASNIEKGDHSMGQVHAYLDSLPGVEYVALRPTWFMENLLEDPQRTWIKNESQVVSATGEGKIPFISADDIASVAFHCLTEWGSHKTEYIIQGPELLSYGQVAEILTSILGKKITHRSLSEAEYTNILVDEIGMPADFAAMSAAMEVDVKNSPQETLNGSVEEVTGNPPRFFRTFAEHEKQKWV</sequence>
<organism>
    <name type="scientific">Penicillium roqueforti (strain FM164)</name>
    <dbReference type="NCBI Taxonomy" id="1365484"/>
    <lineage>
        <taxon>Eukaryota</taxon>
        <taxon>Fungi</taxon>
        <taxon>Dikarya</taxon>
        <taxon>Ascomycota</taxon>
        <taxon>Pezizomycotina</taxon>
        <taxon>Eurotiomycetes</taxon>
        <taxon>Eurotiomycetidae</taxon>
        <taxon>Eurotiales</taxon>
        <taxon>Aspergillaceae</taxon>
        <taxon>Penicillium</taxon>
    </lineage>
</organism>
<proteinExistence type="inferred from homology"/>
<keyword id="KW-0017">Alkaloid metabolism</keyword>
<keyword id="KW-0520">NAD</keyword>
<keyword id="KW-0560">Oxidoreductase</keyword>
<keyword id="KW-1185">Reference proteome</keyword>